<sequence>MDNKKGGLFKIAKKLRNGTKVWARAGYFKCKLLKITTTGAPCLFAGRLKRRYDATFQSMVEIFRQEIANDVTCGRVETALLYFVNKFFRSVGCFGKGKEREVKTDRQRDTGSGEQRIRLERDTETLYQSQLRINQVNGWMSGWMQISLILQ</sequence>
<keyword id="KW-0963">Cytoplasm</keyword>
<keyword id="KW-0469">Meiosis</keyword>
<keyword id="KW-1185">Reference proteome</keyword>
<reference key="1">
    <citation type="journal article" date="2002" name="Nature">
        <title>The genome sequence of Schizosaccharomyces pombe.</title>
        <authorList>
            <person name="Wood V."/>
            <person name="Gwilliam R."/>
            <person name="Rajandream M.A."/>
            <person name="Lyne M.H."/>
            <person name="Lyne R."/>
            <person name="Stewart A."/>
            <person name="Sgouros J.G."/>
            <person name="Peat N."/>
            <person name="Hayles J."/>
            <person name="Baker S.G."/>
            <person name="Basham D."/>
            <person name="Bowman S."/>
            <person name="Brooks K."/>
            <person name="Brown D."/>
            <person name="Brown S."/>
            <person name="Chillingworth T."/>
            <person name="Churcher C.M."/>
            <person name="Collins M."/>
            <person name="Connor R."/>
            <person name="Cronin A."/>
            <person name="Davis P."/>
            <person name="Feltwell T."/>
            <person name="Fraser A."/>
            <person name="Gentles S."/>
            <person name="Goble A."/>
            <person name="Hamlin N."/>
            <person name="Harris D.E."/>
            <person name="Hidalgo J."/>
            <person name="Hodgson G."/>
            <person name="Holroyd S."/>
            <person name="Hornsby T."/>
            <person name="Howarth S."/>
            <person name="Huckle E.J."/>
            <person name="Hunt S."/>
            <person name="Jagels K."/>
            <person name="James K.D."/>
            <person name="Jones L."/>
            <person name="Jones M."/>
            <person name="Leather S."/>
            <person name="McDonald S."/>
            <person name="McLean J."/>
            <person name="Mooney P."/>
            <person name="Moule S."/>
            <person name="Mungall K.L."/>
            <person name="Murphy L.D."/>
            <person name="Niblett D."/>
            <person name="Odell C."/>
            <person name="Oliver K."/>
            <person name="O'Neil S."/>
            <person name="Pearson D."/>
            <person name="Quail M.A."/>
            <person name="Rabbinowitsch E."/>
            <person name="Rutherford K.M."/>
            <person name="Rutter S."/>
            <person name="Saunders D."/>
            <person name="Seeger K."/>
            <person name="Sharp S."/>
            <person name="Skelton J."/>
            <person name="Simmonds M.N."/>
            <person name="Squares R."/>
            <person name="Squares S."/>
            <person name="Stevens K."/>
            <person name="Taylor K."/>
            <person name="Taylor R.G."/>
            <person name="Tivey A."/>
            <person name="Walsh S.V."/>
            <person name="Warren T."/>
            <person name="Whitehead S."/>
            <person name="Woodward J.R."/>
            <person name="Volckaert G."/>
            <person name="Aert R."/>
            <person name="Robben J."/>
            <person name="Grymonprez B."/>
            <person name="Weltjens I."/>
            <person name="Vanstreels E."/>
            <person name="Rieger M."/>
            <person name="Schaefer M."/>
            <person name="Mueller-Auer S."/>
            <person name="Gabel C."/>
            <person name="Fuchs M."/>
            <person name="Duesterhoeft A."/>
            <person name="Fritzc C."/>
            <person name="Holzer E."/>
            <person name="Moestl D."/>
            <person name="Hilbert H."/>
            <person name="Borzym K."/>
            <person name="Langer I."/>
            <person name="Beck A."/>
            <person name="Lehrach H."/>
            <person name="Reinhardt R."/>
            <person name="Pohl T.M."/>
            <person name="Eger P."/>
            <person name="Zimmermann W."/>
            <person name="Wedler H."/>
            <person name="Wambutt R."/>
            <person name="Purnelle B."/>
            <person name="Goffeau A."/>
            <person name="Cadieu E."/>
            <person name="Dreano S."/>
            <person name="Gloux S."/>
            <person name="Lelaure V."/>
            <person name="Mottier S."/>
            <person name="Galibert F."/>
            <person name="Aves S.J."/>
            <person name="Xiang Z."/>
            <person name="Hunt C."/>
            <person name="Moore K."/>
            <person name="Hurst S.M."/>
            <person name="Lucas M."/>
            <person name="Rochet M."/>
            <person name="Gaillardin C."/>
            <person name="Tallada V.A."/>
            <person name="Garzon A."/>
            <person name="Thode G."/>
            <person name="Daga R.R."/>
            <person name="Cruzado L."/>
            <person name="Jimenez J."/>
            <person name="Sanchez M."/>
            <person name="del Rey F."/>
            <person name="Benito J."/>
            <person name="Dominguez A."/>
            <person name="Revuelta J.L."/>
            <person name="Moreno S."/>
            <person name="Armstrong J."/>
            <person name="Forsburg S.L."/>
            <person name="Cerutti L."/>
            <person name="Lowe T."/>
            <person name="McCombie W.R."/>
            <person name="Paulsen I."/>
            <person name="Potashkin J."/>
            <person name="Shpakovski G.V."/>
            <person name="Ussery D."/>
            <person name="Barrell B.G."/>
            <person name="Nurse P."/>
        </authorList>
    </citation>
    <scope>NUCLEOTIDE SEQUENCE [LARGE SCALE GENOMIC DNA]</scope>
    <source>
        <strain>972 / ATCC 24843</strain>
    </source>
</reference>
<reference key="2">
    <citation type="journal article" date="2005" name="Curr. Biol.">
        <title>A large-scale screen in S. pombe identifies seven novel genes required for critical meiotic events.</title>
        <authorList>
            <person name="Martin-Castellanos C."/>
            <person name="Blanco M."/>
            <person name="Rozalen A.E."/>
            <person name="Perez-Hidalgo L."/>
            <person name="Garcia A.I."/>
            <person name="Conde F."/>
            <person name="Mata J."/>
            <person name="Ellermeier C."/>
            <person name="Davis L."/>
            <person name="San-Segundo P."/>
            <person name="Smith G.R."/>
            <person name="Moreno S."/>
        </authorList>
    </citation>
    <scope>FUNCTION IN MEIOSIS</scope>
</reference>
<reference key="3">
    <citation type="journal article" date="2006" name="Nat. Biotechnol.">
        <title>ORFeome cloning and global analysis of protein localization in the fission yeast Schizosaccharomyces pombe.</title>
        <authorList>
            <person name="Matsuyama A."/>
            <person name="Arai R."/>
            <person name="Yashiroda Y."/>
            <person name="Shirai A."/>
            <person name="Kamata A."/>
            <person name="Sekido S."/>
            <person name="Kobayashi Y."/>
            <person name="Hashimoto A."/>
            <person name="Hamamoto M."/>
            <person name="Hiraoka Y."/>
            <person name="Horinouchi S."/>
            <person name="Yoshida M."/>
        </authorList>
    </citation>
    <scope>SUBCELLULAR LOCATION [LARGE SCALE ANALYSIS]</scope>
</reference>
<dbReference type="EMBL" id="CU329670">
    <property type="protein sequence ID" value="CAB11055.1"/>
    <property type="molecule type" value="Genomic_DNA"/>
</dbReference>
<dbReference type="PIR" id="T38838">
    <property type="entry name" value="T38838"/>
</dbReference>
<dbReference type="RefSeq" id="NP_593864.1">
    <property type="nucleotide sequence ID" value="NM_001019293.2"/>
</dbReference>
<dbReference type="BioGRID" id="280029">
    <property type="interactions" value="7"/>
</dbReference>
<dbReference type="PaxDb" id="4896-SPAC4F8.08.1"/>
<dbReference type="EnsemblFungi" id="SPAC4F8.08.1">
    <property type="protein sequence ID" value="SPAC4F8.08.1:pep"/>
    <property type="gene ID" value="SPAC4F8.08"/>
</dbReference>
<dbReference type="GeneID" id="2543615"/>
<dbReference type="KEGG" id="spo:2543615"/>
<dbReference type="PomBase" id="SPAC4F8.08">
    <property type="gene designation" value="mug114"/>
</dbReference>
<dbReference type="VEuPathDB" id="FungiDB:SPAC4F8.08"/>
<dbReference type="HOGENOM" id="CLU_1732543_0_0_1"/>
<dbReference type="InParanoid" id="O14183"/>
<dbReference type="PRO" id="PR:O14183"/>
<dbReference type="Proteomes" id="UP000002485">
    <property type="component" value="Chromosome I"/>
</dbReference>
<dbReference type="GO" id="GO:0005737">
    <property type="term" value="C:cytoplasm"/>
    <property type="evidence" value="ECO:0007005"/>
    <property type="project" value="PomBase"/>
</dbReference>
<dbReference type="GO" id="GO:0051321">
    <property type="term" value="P:meiotic cell cycle"/>
    <property type="evidence" value="ECO:0007669"/>
    <property type="project" value="UniProtKB-KW"/>
</dbReference>
<name>MU114_SCHPO</name>
<protein>
    <recommendedName>
        <fullName>Meiotically up-regulated gene 114 protein</fullName>
    </recommendedName>
</protein>
<organism>
    <name type="scientific">Schizosaccharomyces pombe (strain 972 / ATCC 24843)</name>
    <name type="common">Fission yeast</name>
    <dbReference type="NCBI Taxonomy" id="284812"/>
    <lineage>
        <taxon>Eukaryota</taxon>
        <taxon>Fungi</taxon>
        <taxon>Dikarya</taxon>
        <taxon>Ascomycota</taxon>
        <taxon>Taphrinomycotina</taxon>
        <taxon>Schizosaccharomycetes</taxon>
        <taxon>Schizosaccharomycetales</taxon>
        <taxon>Schizosaccharomycetaceae</taxon>
        <taxon>Schizosaccharomyces</taxon>
    </lineage>
</organism>
<evidence type="ECO:0000269" key="1">
    <source>
    </source>
</evidence>
<evidence type="ECO:0000269" key="2">
    <source>
    </source>
</evidence>
<gene>
    <name type="primary">mug114</name>
    <name type="ORF">SPAC4F8.08</name>
</gene>
<accession>O14183</accession>
<feature type="chain" id="PRO_0000116660" description="Meiotically up-regulated gene 114 protein">
    <location>
        <begin position="1"/>
        <end position="151"/>
    </location>
</feature>
<comment type="function">
    <text evidence="1">Has a role in meiosis.</text>
</comment>
<comment type="subcellular location">
    <subcellularLocation>
        <location evidence="2">Cytoplasm</location>
    </subcellularLocation>
</comment>
<proteinExistence type="evidence at protein level"/>